<comment type="subcellular location">
    <subcellularLocation>
        <location evidence="2">Mitochondrion membrane</location>
        <topology evidence="2">Multi-pass membrane protein</topology>
    </subcellularLocation>
</comment>
<comment type="similarity">
    <text evidence="2">Belongs to the ATPase protein YMF19 family.</text>
</comment>
<comment type="caution">
    <text evidence="2">Could be the product of a pseudogene.</text>
</comment>
<sequence>MLCRTNVLHLRPQLNKFTYLTQFLWLCLFYITFYFVLYSVLVFTNTEWPFILLKKRLVSQEKIRAYQSNDCVGQTRGLTSEPSWRDACWRALILAYLTSIYFFPILGSFPRVLKDQVDFGYIPTVCILLYVIFLFFFDSYRKSLFTTALTHSFWL</sequence>
<accession>P38461</accession>
<gene>
    <name type="primary">YMF18</name>
</gene>
<evidence type="ECO:0000255" key="1"/>
<evidence type="ECO:0000305" key="2"/>
<geneLocation type="mitochondrion"/>
<protein>
    <recommendedName>
        <fullName>Putative ATP synthase protein YMF19-like protein</fullName>
    </recommendedName>
    <alternativeName>
        <fullName>ORF 155</fullName>
    </alternativeName>
</protein>
<proteinExistence type="uncertain"/>
<dbReference type="EMBL" id="M68929">
    <property type="protein sequence ID" value="AAC09427.1"/>
    <property type="molecule type" value="Genomic_DNA"/>
</dbReference>
<dbReference type="PIR" id="S25986">
    <property type="entry name" value="S25986"/>
</dbReference>
<dbReference type="SMR" id="P38461"/>
<dbReference type="GO" id="GO:0031966">
    <property type="term" value="C:mitochondrial membrane"/>
    <property type="evidence" value="ECO:0007669"/>
    <property type="project" value="UniProtKB-SubCell"/>
</dbReference>
<dbReference type="GO" id="GO:0006754">
    <property type="term" value="P:ATP biosynthetic process"/>
    <property type="evidence" value="ECO:0007669"/>
    <property type="project" value="UniProtKB-KW"/>
</dbReference>
<dbReference type="InterPro" id="IPR003319">
    <property type="entry name" value="YMF19-like_N"/>
</dbReference>
<dbReference type="Pfam" id="PF02326">
    <property type="entry name" value="YMF19"/>
    <property type="match status" value="1"/>
</dbReference>
<name>YMF18_MARPO</name>
<reference key="1">
    <citation type="journal article" date="1992" name="J. Mol. Biol.">
        <title>Gene organization deduced from the complete sequence of liverwort Marchantia polymorpha mitochondrial DNA. A primitive form of plant mitochondrial genome.</title>
        <authorList>
            <person name="Oda K."/>
            <person name="Yamato K."/>
            <person name="Ohta E."/>
            <person name="Nakamura Y."/>
            <person name="Takemura M."/>
            <person name="Nozato N."/>
            <person name="Akashi K."/>
            <person name="Kanegae T."/>
            <person name="Ogura Y."/>
            <person name="Kohchi T."/>
            <person name="Ohyama K."/>
        </authorList>
    </citation>
    <scope>NUCLEOTIDE SEQUENCE [GENOMIC DNA]</scope>
</reference>
<organism>
    <name type="scientific">Marchantia polymorpha</name>
    <name type="common">Common liverwort</name>
    <name type="synonym">Marchantia aquatica</name>
    <dbReference type="NCBI Taxonomy" id="3197"/>
    <lineage>
        <taxon>Eukaryota</taxon>
        <taxon>Viridiplantae</taxon>
        <taxon>Streptophyta</taxon>
        <taxon>Embryophyta</taxon>
        <taxon>Marchantiophyta</taxon>
        <taxon>Marchantiopsida</taxon>
        <taxon>Marchantiidae</taxon>
        <taxon>Marchantiales</taxon>
        <taxon>Marchantiaceae</taxon>
        <taxon>Marchantia</taxon>
    </lineage>
</organism>
<feature type="chain" id="PRO_0000196840" description="Putative ATP synthase protein YMF19-like protein">
    <location>
        <begin position="1"/>
        <end position="155"/>
    </location>
</feature>
<feature type="transmembrane region" description="Helical" evidence="1">
    <location>
        <begin position="23"/>
        <end position="43"/>
    </location>
</feature>
<feature type="transmembrane region" description="Helical" evidence="1">
    <location>
        <begin position="89"/>
        <end position="109"/>
    </location>
</feature>
<feature type="transmembrane region" description="Helical" evidence="1">
    <location>
        <begin position="117"/>
        <end position="137"/>
    </location>
</feature>
<keyword id="KW-0066">ATP synthesis</keyword>
<keyword id="KW-0472">Membrane</keyword>
<keyword id="KW-0496">Mitochondrion</keyword>
<keyword id="KW-0812">Transmembrane</keyword>
<keyword id="KW-1133">Transmembrane helix</keyword>